<keyword id="KW-1003">Cell membrane</keyword>
<keyword id="KW-0297">G-protein coupled receptor</keyword>
<keyword id="KW-0325">Glycoprotein</keyword>
<keyword id="KW-0472">Membrane</keyword>
<keyword id="KW-0589">Pheromone response</keyword>
<keyword id="KW-0675">Receptor</keyword>
<keyword id="KW-1185">Reference proteome</keyword>
<keyword id="KW-0732">Signal</keyword>
<keyword id="KW-0807">Transducer</keyword>
<keyword id="KW-0812">Transmembrane</keyword>
<keyword id="KW-1133">Transmembrane helix</keyword>
<accession>E9Q6I0</accession>
<accession>D7URW5</accession>
<gene>
    <name evidence="8" type="primary">Vmn2r116</name>
    <name evidence="7" type="synonym">V2rp5</name>
</gene>
<dbReference type="EMBL" id="AB540947">
    <property type="protein sequence ID" value="BAJ10472.1"/>
    <property type="molecule type" value="mRNA"/>
</dbReference>
<dbReference type="EMBL" id="CT485617">
    <property type="status" value="NOT_ANNOTATED_CDS"/>
    <property type="molecule type" value="Genomic_DNA"/>
</dbReference>
<dbReference type="CCDS" id="CCDS50009.1"/>
<dbReference type="RefSeq" id="NP_001098050.1">
    <property type="nucleotide sequence ID" value="NM_001104580.1"/>
</dbReference>
<dbReference type="SMR" id="E9Q6I0"/>
<dbReference type="FunCoup" id="E9Q6I0">
    <property type="interactions" value="1"/>
</dbReference>
<dbReference type="IntAct" id="E9Q6I0">
    <property type="interactions" value="1"/>
</dbReference>
<dbReference type="STRING" id="10090.ENSMUSP00000128106"/>
<dbReference type="GlyCosmos" id="E9Q6I0">
    <property type="glycosylation" value="1 site, No reported glycans"/>
</dbReference>
<dbReference type="GlyGen" id="E9Q6I0">
    <property type="glycosylation" value="1 site"/>
</dbReference>
<dbReference type="jPOST" id="E9Q6I0"/>
<dbReference type="PaxDb" id="10090-ENSMUSP00000128106"/>
<dbReference type="Ensembl" id="ENSMUST00000164856.3">
    <property type="protein sequence ID" value="ENSMUSP00000128106.2"/>
    <property type="gene ID" value="ENSMUSG00000090966.3"/>
</dbReference>
<dbReference type="GeneID" id="619697"/>
<dbReference type="KEGG" id="mmu:619697"/>
<dbReference type="UCSC" id="uc009vbt.1">
    <property type="organism name" value="mouse"/>
</dbReference>
<dbReference type="AGR" id="MGI:3646674"/>
<dbReference type="CTD" id="619697"/>
<dbReference type="MGI" id="MGI:3646674">
    <property type="gene designation" value="Vmn2r116"/>
</dbReference>
<dbReference type="VEuPathDB" id="HostDB:ENSMUSG00000090966"/>
<dbReference type="eggNOG" id="KOG1056">
    <property type="taxonomic scope" value="Eukaryota"/>
</dbReference>
<dbReference type="GeneTree" id="ENSGT00950000183069"/>
<dbReference type="HOGENOM" id="CLU_005389_5_0_1"/>
<dbReference type="InParanoid" id="E9Q6I0"/>
<dbReference type="OMA" id="DIMILAQ"/>
<dbReference type="OrthoDB" id="5984008at2759"/>
<dbReference type="PhylomeDB" id="E9Q6I0"/>
<dbReference type="TreeFam" id="TF340115"/>
<dbReference type="BioGRID-ORCS" id="619697">
    <property type="hits" value="5 hits in 73 CRISPR screens"/>
</dbReference>
<dbReference type="ChiTaRS" id="Vmn2r116">
    <property type="organism name" value="mouse"/>
</dbReference>
<dbReference type="PRO" id="PR:E9Q6I0"/>
<dbReference type="Proteomes" id="UP000000589">
    <property type="component" value="Chromosome 17"/>
</dbReference>
<dbReference type="RNAct" id="E9Q6I0">
    <property type="molecule type" value="protein"/>
</dbReference>
<dbReference type="GO" id="GO:0005886">
    <property type="term" value="C:plasma membrane"/>
    <property type="evidence" value="ECO:0007669"/>
    <property type="project" value="UniProtKB-SubCell"/>
</dbReference>
<dbReference type="GO" id="GO:0016503">
    <property type="term" value="F:pheromone receptor activity"/>
    <property type="evidence" value="ECO:0000316"/>
    <property type="project" value="MGI"/>
</dbReference>
<dbReference type="GO" id="GO:0045925">
    <property type="term" value="P:positive regulation of female receptivity"/>
    <property type="evidence" value="ECO:0000316"/>
    <property type="project" value="MGI"/>
</dbReference>
<dbReference type="GO" id="GO:0019236">
    <property type="term" value="P:response to pheromone"/>
    <property type="evidence" value="ECO:0007669"/>
    <property type="project" value="UniProtKB-KW"/>
</dbReference>
<dbReference type="CDD" id="cd15283">
    <property type="entry name" value="7tmC_V2R_pheromone"/>
    <property type="match status" value="1"/>
</dbReference>
<dbReference type="CDD" id="cd06365">
    <property type="entry name" value="PBP1_pheromone_receptor"/>
    <property type="match status" value="1"/>
</dbReference>
<dbReference type="FunFam" id="2.10.50.30:FF:000002">
    <property type="entry name" value="Vomeronasal 2 receptor, h1"/>
    <property type="match status" value="1"/>
</dbReference>
<dbReference type="FunFam" id="3.40.50.2300:FF:000024">
    <property type="entry name" value="Vomeronasal 2, receptor 73"/>
    <property type="match status" value="1"/>
</dbReference>
<dbReference type="Gene3D" id="3.40.50.2300">
    <property type="match status" value="2"/>
</dbReference>
<dbReference type="Gene3D" id="2.10.50.30">
    <property type="entry name" value="GPCR, family 3, nine cysteines domain"/>
    <property type="match status" value="1"/>
</dbReference>
<dbReference type="InterPro" id="IPR001828">
    <property type="entry name" value="ANF_lig-bd_rcpt"/>
</dbReference>
<dbReference type="InterPro" id="IPR000337">
    <property type="entry name" value="GPCR_3"/>
</dbReference>
<dbReference type="InterPro" id="IPR011500">
    <property type="entry name" value="GPCR_3_9-Cys_dom"/>
</dbReference>
<dbReference type="InterPro" id="IPR038550">
    <property type="entry name" value="GPCR_3_9-Cys_sf"/>
</dbReference>
<dbReference type="InterPro" id="IPR017978">
    <property type="entry name" value="GPCR_3_C"/>
</dbReference>
<dbReference type="InterPro" id="IPR000068">
    <property type="entry name" value="GPCR_3_Ca_sens_rcpt-rel"/>
</dbReference>
<dbReference type="InterPro" id="IPR017979">
    <property type="entry name" value="GPCR_3_CS"/>
</dbReference>
<dbReference type="InterPro" id="IPR004073">
    <property type="entry name" value="GPCR_3_vmron_rcpt_2"/>
</dbReference>
<dbReference type="InterPro" id="IPR028082">
    <property type="entry name" value="Peripla_BP_I"/>
</dbReference>
<dbReference type="PANTHER" id="PTHR24061">
    <property type="entry name" value="CALCIUM-SENSING RECEPTOR-RELATED"/>
    <property type="match status" value="1"/>
</dbReference>
<dbReference type="PANTHER" id="PTHR24061:SF398">
    <property type="entry name" value="VOMERONASAL 2, RECEPTOR 111-RELATED"/>
    <property type="match status" value="1"/>
</dbReference>
<dbReference type="Pfam" id="PF00003">
    <property type="entry name" value="7tm_3"/>
    <property type="match status" value="1"/>
</dbReference>
<dbReference type="Pfam" id="PF01094">
    <property type="entry name" value="ANF_receptor"/>
    <property type="match status" value="1"/>
</dbReference>
<dbReference type="Pfam" id="PF07562">
    <property type="entry name" value="NCD3G"/>
    <property type="match status" value="1"/>
</dbReference>
<dbReference type="PRINTS" id="PR00248">
    <property type="entry name" value="GPCRMGR"/>
</dbReference>
<dbReference type="PRINTS" id="PR01535">
    <property type="entry name" value="VOMERONASL2R"/>
</dbReference>
<dbReference type="SUPFAM" id="SSF53822">
    <property type="entry name" value="Periplasmic binding protein-like I"/>
    <property type="match status" value="1"/>
</dbReference>
<dbReference type="PROSITE" id="PS00981">
    <property type="entry name" value="G_PROTEIN_RECEP_F3_3"/>
    <property type="match status" value="1"/>
</dbReference>
<dbReference type="PROSITE" id="PS50259">
    <property type="entry name" value="G_PROTEIN_RECEP_F3_4"/>
    <property type="match status" value="1"/>
</dbReference>
<feature type="signal peptide" evidence="1">
    <location>
        <begin position="1"/>
        <end position="18"/>
    </location>
</feature>
<feature type="chain" id="PRO_0000424696" description="Vomeronasal type-2 receptor 116" evidence="1">
    <location>
        <begin position="19"/>
        <end position="856"/>
    </location>
</feature>
<feature type="topological domain" description="Extracellular" evidence="1">
    <location>
        <begin position="19"/>
        <end position="586"/>
    </location>
</feature>
<feature type="transmembrane region" description="Helical" evidence="1">
    <location>
        <begin position="587"/>
        <end position="607"/>
    </location>
</feature>
<feature type="topological domain" description="Cytoplasmic" evidence="1">
    <location>
        <begin position="608"/>
        <end position="622"/>
    </location>
</feature>
<feature type="transmembrane region" description="Helical" evidence="1">
    <location>
        <begin position="623"/>
        <end position="643"/>
    </location>
</feature>
<feature type="topological domain" description="Extracellular" evidence="1">
    <location>
        <begin position="644"/>
        <end position="658"/>
    </location>
</feature>
<feature type="transmembrane region" description="Helical" evidence="1">
    <location>
        <begin position="659"/>
        <end position="679"/>
    </location>
</feature>
<feature type="topological domain" description="Cytoplasmic" evidence="1">
    <location>
        <begin position="680"/>
        <end position="690"/>
    </location>
</feature>
<feature type="transmembrane region" description="Helical" evidence="1">
    <location>
        <begin position="691"/>
        <end position="711"/>
    </location>
</feature>
<feature type="topological domain" description="Extracellular" evidence="1">
    <location>
        <begin position="712"/>
        <end position="745"/>
    </location>
</feature>
<feature type="transmembrane region" description="Helical" evidence="1">
    <location>
        <begin position="746"/>
        <end position="766"/>
    </location>
</feature>
<feature type="topological domain" description="Cytoplasmic" evidence="1">
    <location>
        <begin position="767"/>
        <end position="778"/>
    </location>
</feature>
<feature type="transmembrane region" description="Helical" evidence="1">
    <location>
        <begin position="779"/>
        <end position="799"/>
    </location>
</feature>
<feature type="topological domain" description="Extracellular" evidence="1">
    <location>
        <begin position="800"/>
        <end position="806"/>
    </location>
</feature>
<feature type="transmembrane region" description="Helical" evidence="1">
    <location>
        <begin position="807"/>
        <end position="827"/>
    </location>
</feature>
<feature type="topological domain" description="Cytoplasmic" evidence="1">
    <location>
        <begin position="828"/>
        <end position="856"/>
    </location>
</feature>
<feature type="glycosylation site" description="N-linked (GlcNAc...) asparagine" evidence="1">
    <location>
        <position position="94"/>
    </location>
</feature>
<protein>
    <recommendedName>
        <fullName evidence="8">Vomeronasal type-2 receptor 116</fullName>
    </recommendedName>
    <alternativeName>
        <fullName evidence="5">Vomeronasal type-2 receptor P5</fullName>
    </alternativeName>
</protein>
<organism>
    <name type="scientific">Mus musculus</name>
    <name type="common">Mouse</name>
    <dbReference type="NCBI Taxonomy" id="10090"/>
    <lineage>
        <taxon>Eukaryota</taxon>
        <taxon>Metazoa</taxon>
        <taxon>Chordata</taxon>
        <taxon>Craniata</taxon>
        <taxon>Vertebrata</taxon>
        <taxon>Euteleostomi</taxon>
        <taxon>Mammalia</taxon>
        <taxon>Eutheria</taxon>
        <taxon>Euarchontoglires</taxon>
        <taxon>Glires</taxon>
        <taxon>Rodentia</taxon>
        <taxon>Myomorpha</taxon>
        <taxon>Muroidea</taxon>
        <taxon>Muridae</taxon>
        <taxon>Murinae</taxon>
        <taxon>Mus</taxon>
        <taxon>Mus</taxon>
    </lineage>
</organism>
<proteinExistence type="evidence at protein level"/>
<evidence type="ECO:0000255" key="1"/>
<evidence type="ECO:0000269" key="2">
    <source>
    </source>
</evidence>
<evidence type="ECO:0000269" key="3">
    <source>
    </source>
</evidence>
<evidence type="ECO:0000269" key="4">
    <source ref="3"/>
</evidence>
<evidence type="ECO:0000303" key="5">
    <source>
    </source>
</evidence>
<evidence type="ECO:0000305" key="6"/>
<evidence type="ECO:0000312" key="7">
    <source>
        <dbReference type="EMBL" id="BAJ10472.1"/>
    </source>
</evidence>
<evidence type="ECO:0000312" key="8">
    <source>
        <dbReference type="MGI" id="MGI:3646674"/>
    </source>
</evidence>
<comment type="function">
    <text evidence="2 3 4">Receptor for the Esp1 pheromone. Mediates the response to Esp1 which enhances female sexual receptive behavior (lordosis) upon male mounting, resulting in successful copulation.</text>
</comment>
<comment type="subcellular location">
    <subcellularLocation>
        <location evidence="1">Cell membrane</location>
        <topology evidence="1">Multi-pass membrane protein</topology>
    </subcellularLocation>
</comment>
<comment type="tissue specificity">
    <text evidence="2">Expressed in the vomeronasal organ.</text>
</comment>
<comment type="disruption phenotype">
    <text evidence="2">No response of neurons in the vomeronasal organ or accessory olfactory bulb to Esp1 and no enhancement of lordosis following exposure to Esp1.</text>
</comment>
<comment type="similarity">
    <text evidence="1">Belongs to the G-protein coupled receptor 3 family.</text>
</comment>
<reference evidence="6 7" key="1">
    <citation type="journal article" date="2010" name="Nature">
        <title>The male mouse pheromone ESP1 enhances female sexual receptive behaviour through a specific vomeronasal receptor.</title>
        <authorList>
            <person name="Haga S."/>
            <person name="Hattori T."/>
            <person name="Sato T."/>
            <person name="Sato K."/>
            <person name="Matsuda S."/>
            <person name="Kobayakawa R."/>
            <person name="Sakano H."/>
            <person name="Yoshihara Y."/>
            <person name="Kikusui T."/>
            <person name="Touhara K."/>
        </authorList>
    </citation>
    <scope>NUCLEOTIDE SEQUENCE [MRNA]</scope>
    <scope>FUNCTION</scope>
    <scope>TISSUE SPECIFICITY</scope>
    <scope>DISRUPTION PHENOTYPE</scope>
    <source>
        <strain evidence="7">C57BL/6J</strain>
    </source>
</reference>
<reference key="2">
    <citation type="journal article" date="2009" name="PLoS Biol.">
        <title>Lineage-specific biology revealed by a finished genome assembly of the mouse.</title>
        <authorList>
            <person name="Church D.M."/>
            <person name="Goodstadt L."/>
            <person name="Hillier L.W."/>
            <person name="Zody M.C."/>
            <person name="Goldstein S."/>
            <person name="She X."/>
            <person name="Bult C.J."/>
            <person name="Agarwala R."/>
            <person name="Cherry J.L."/>
            <person name="DiCuccio M."/>
            <person name="Hlavina W."/>
            <person name="Kapustin Y."/>
            <person name="Meric P."/>
            <person name="Maglott D."/>
            <person name="Birtle Z."/>
            <person name="Marques A.C."/>
            <person name="Graves T."/>
            <person name="Zhou S."/>
            <person name="Teague B."/>
            <person name="Potamousis K."/>
            <person name="Churas C."/>
            <person name="Place M."/>
            <person name="Herschleb J."/>
            <person name="Runnheim R."/>
            <person name="Forrest D."/>
            <person name="Amos-Landgraf J."/>
            <person name="Schwartz D.C."/>
            <person name="Cheng Z."/>
            <person name="Lindblad-Toh K."/>
            <person name="Eichler E.E."/>
            <person name="Ponting C.P."/>
        </authorList>
    </citation>
    <scope>NUCLEOTIDE SEQUENCE [LARGE SCALE GENOMIC DNA]</scope>
    <source>
        <strain>C57BL/6J</strain>
    </source>
</reference>
<reference evidence="6" key="3">
    <citation type="journal article" date="2007" name="Pure Appl. Chem.">
        <title>Molecular characterization of vomeronasal sensory neurons responding to a male-specific peptide in tear fluid: sexual communication in mice.</title>
        <authorList>
            <person name="Haga S."/>
            <person name="Kimoto H."/>
            <person name="Touhara K."/>
        </authorList>
    </citation>
    <scope>FUNCTION</scope>
</reference>
<reference evidence="6" key="4">
    <citation type="journal article" date="2013" name="J. Biol. Chem.">
        <title>Structure of the mouse sex peptide pheromone ESP1 reveals a molecular basis for specific binding to the class C G-protein-coupled vomeronasal receptor.</title>
        <authorList>
            <person name="Yoshinaga S."/>
            <person name="Sato T."/>
            <person name="Hirakane M."/>
            <person name="Esaki K."/>
            <person name="Hamaguchi T."/>
            <person name="Haga-Yamanaka S."/>
            <person name="Tsunoda M."/>
            <person name="Kimoto H."/>
            <person name="Shimada I."/>
            <person name="Touhara K."/>
            <person name="Terasawa H."/>
        </authorList>
    </citation>
    <scope>INTERACTION WITH ESP1</scope>
</reference>
<name>V2116_MOUSE</name>
<sequence length="856" mass="97704">MFTLIFLFLFLNIPLLVADFISPRCFWKMKQNEYRDRHHGTGCIFLILAIQQPVKKEYFSHILNIQTHTENHKYALALAFSIYEINRNPDLLPNMSLIFIFSADSCEWESELSLIRFGLQNSDNLPNYLCEELTKCILALTNMNWATTVTLHTILSNFLSDQLLHITYGTFHPALSDHEKFPYLHQMASDHTSLALALVSFIIHFGWNWVGLVISDSDQGIQFLSYLRREMEKYTLCFAFVNMIPLNINLYMSRAEVYYNQIMTSSTNVVIIYGDTDSTLAVSFRMWESLGIQRLWITTSQWDVSPSMKDFTFGNKYGTFAFEQHHSEISGFKHFVQTLNSVKCPDEYLVKLEWMHFNCEVSASKCKTLKNCSSNHSLKWLMVHTFDMAFIEESYYIYNAVYAFAHVLHQFTFQKFDNLPKDNGKEHNYSCKKLYSYLRKNHFINPVGDRVSMNQRDKLQEEYDIVYIWNFPQGLGLRVKIGMFSPYFPNGQQVHLSEDMLKWARGSTQVPTSMCSADCGPGSRKFRMDGMAACCFHCKPCPENEISNETNVDNCVQCPEDQYANTEQNHCIRKAVVFLSYEEPLGVALSLLSLCFSAFTTVVLGIFVKHHNTPIVKANNRTLTYLLLISLIFCFLCPLLFIGHPNSATCILQQLTFGVVFTVSLSTVLAKTITVVLAFKIIASQRMMKYFLISGAINYIIPICILIQVIVCAVWLRASPPSVDIDAHSEHGQIIIVCHKGSVNAFYCVLGYLAILAFGSFTLAFLSRNLPGAFNEAKSITFSMLVFCSVWVTFIPVYHSTKGKVMVAVEIFSTLASSAGMLGCIFVPKCYTILFRQDQNSLEMIRVKSSSNVHVS</sequence>